<sequence>MRSTPLGTTAVSPASIKHNSYGYGRFVSSSGVSNFSIHRRRRHSSFSISQAPSQINSGACNASQIVDLFPAVSPEIVVREARLEDCWEVAETHCSSFFPGYSFPLDVVLRVDRLMAMVMGFSIPPGCQRTCLVAVIGSSVDETICFGSDDFKIGAFDAKISLNKGYVAGILTVDTVADYLPRKGPLRQRRTGIAYVSNVAVRENFRRKGIAKRLIWKAEALAKNWGCRAIGLHCDLNNLGATKLYKDQGFRSIKIPEGATWPQPKTSPDTRFTFMMKLVNNNNTQALEQFR</sequence>
<name>GNAT4_ARATH</name>
<feature type="transit peptide" description="Chloroplast" evidence="3">
    <location>
        <begin position="1"/>
        <end position="61"/>
    </location>
</feature>
<feature type="chain" id="PRO_0000457953" description="GCN5-related N-acetyltransferase 4, chloroplastic">
    <location>
        <begin position="62"/>
        <end position="291"/>
    </location>
</feature>
<feature type="domain" description="N-acetyltransferase" evidence="4">
    <location>
        <begin position="76"/>
        <end position="280"/>
    </location>
</feature>
<feature type="active site" description="Proton donor" evidence="2">
    <location>
        <position position="245"/>
    </location>
</feature>
<feature type="binding site" evidence="2">
    <location>
        <begin position="199"/>
        <end position="201"/>
    </location>
    <ligand>
        <name>acetyl-CoA</name>
        <dbReference type="ChEBI" id="CHEBI:57288"/>
    </ligand>
</feature>
<feature type="binding site" evidence="2">
    <location>
        <begin position="207"/>
        <end position="212"/>
    </location>
    <ligand>
        <name>acetyl-CoA</name>
        <dbReference type="ChEBI" id="CHEBI:57288"/>
    </ligand>
</feature>
<feature type="binding site" evidence="2">
    <location>
        <begin position="238"/>
        <end position="240"/>
    </location>
    <ligand>
        <name>acetyl-CoA</name>
        <dbReference type="ChEBI" id="CHEBI:57288"/>
    </ligand>
</feature>
<feature type="binding site" evidence="2">
    <location>
        <position position="245"/>
    </location>
    <ligand>
        <name>acetyl-CoA</name>
        <dbReference type="ChEBI" id="CHEBI:57288"/>
    </ligand>
</feature>
<feature type="modified residue" description="N6-acetyllysine" evidence="5">
    <location>
        <position position="217"/>
    </location>
</feature>
<feature type="modified residue" description="N6-acetyllysine" evidence="5">
    <location>
        <position position="254"/>
    </location>
</feature>
<feature type="modified residue" description="N6-acetyllysine" evidence="5">
    <location>
        <position position="265"/>
    </location>
</feature>
<feature type="splice variant" id="VSP_061872" description="In isoform 2.">
    <original>RTGIAYVSNVAVRENFRRKGIAKRLIWKAEALAKNWGCR</original>
    <variation>SQDRDRLCIKCGSSREFPAQRNSQETHMESRGFSQELGM</variation>
    <location>
        <begin position="190"/>
        <end position="228"/>
    </location>
</feature>
<feature type="splice variant" id="VSP_061873" description="In isoform 2.">
    <location>
        <begin position="229"/>
        <end position="291"/>
    </location>
</feature>
<keyword id="KW-0007">Acetylation</keyword>
<keyword id="KW-0025">Alternative splicing</keyword>
<keyword id="KW-0150">Chloroplast</keyword>
<keyword id="KW-0934">Plastid</keyword>
<keyword id="KW-1185">Reference proteome</keyword>
<keyword id="KW-0808">Transferase</keyword>
<keyword id="KW-0809">Transit peptide</keyword>
<protein>
    <recommendedName>
        <fullName evidence="8">GCN5-related N-acetyltransferase 4, chloroplastic</fullName>
        <ecNumber evidence="4 5">2.3.1.255</ecNumber>
        <ecNumber evidence="4 6">2.3.1.48</ecNumber>
    </recommendedName>
    <alternativeName>
        <fullName evidence="7">N-alpha-acetyltransferase 70</fullName>
        <shortName evidence="7">AtNAA70</shortName>
    </alternativeName>
</protein>
<dbReference type="EC" id="2.3.1.255" evidence="4 5"/>
<dbReference type="EC" id="2.3.1.48" evidence="4 6"/>
<dbReference type="EMBL" id="AC005770">
    <property type="protein sequence ID" value="AAC79611.1"/>
    <property type="molecule type" value="Genomic_DNA"/>
</dbReference>
<dbReference type="EMBL" id="CP002685">
    <property type="protein sequence ID" value="AEC09624.1"/>
    <property type="molecule type" value="Genomic_DNA"/>
</dbReference>
<dbReference type="EMBL" id="CP002685">
    <property type="protein sequence ID" value="AEC09625.1"/>
    <property type="molecule type" value="Genomic_DNA"/>
</dbReference>
<dbReference type="EMBL" id="BT014792">
    <property type="protein sequence ID" value="AAT41775.1"/>
    <property type="molecule type" value="mRNA"/>
</dbReference>
<dbReference type="EMBL" id="BT015017">
    <property type="protein sequence ID" value="AAT70468.1"/>
    <property type="molecule type" value="mRNA"/>
</dbReference>
<dbReference type="EMBL" id="AK228872">
    <property type="protein sequence ID" value="BAF00763.1"/>
    <property type="molecule type" value="mRNA"/>
</dbReference>
<dbReference type="PIR" id="H84811">
    <property type="entry name" value="H84811"/>
</dbReference>
<dbReference type="RefSeq" id="NP_181433.1">
    <molecule id="Q9ZV08-1"/>
    <property type="nucleotide sequence ID" value="NM_129457.4"/>
</dbReference>
<dbReference type="RefSeq" id="NP_850308.1">
    <molecule id="Q9ZV08-2"/>
    <property type="nucleotide sequence ID" value="NM_179977.2"/>
</dbReference>
<dbReference type="FunCoup" id="Q9ZV08">
    <property type="interactions" value="388"/>
</dbReference>
<dbReference type="IntAct" id="Q9ZV08">
    <property type="interactions" value="5"/>
</dbReference>
<dbReference type="STRING" id="3702.Q9ZV08"/>
<dbReference type="iPTMnet" id="Q9ZV08"/>
<dbReference type="PaxDb" id="3702-AT2G39000.1"/>
<dbReference type="ProteomicsDB" id="187591"/>
<dbReference type="EnsemblPlants" id="AT2G39000.1">
    <molecule id="Q9ZV08-1"/>
    <property type="protein sequence ID" value="AT2G39000.1"/>
    <property type="gene ID" value="AT2G39000"/>
</dbReference>
<dbReference type="EnsemblPlants" id="AT2G39000.2">
    <molecule id="Q9ZV08-2"/>
    <property type="protein sequence ID" value="AT2G39000.2"/>
    <property type="gene ID" value="AT2G39000"/>
</dbReference>
<dbReference type="GeneID" id="818486"/>
<dbReference type="Gramene" id="AT2G39000.1">
    <molecule id="Q9ZV08-1"/>
    <property type="protein sequence ID" value="AT2G39000.1"/>
    <property type="gene ID" value="AT2G39000"/>
</dbReference>
<dbReference type="Gramene" id="AT2G39000.2">
    <molecule id="Q9ZV08-2"/>
    <property type="protein sequence ID" value="AT2G39000.2"/>
    <property type="gene ID" value="AT2G39000"/>
</dbReference>
<dbReference type="KEGG" id="ath:AT2G39000"/>
<dbReference type="Araport" id="AT2G39000"/>
<dbReference type="TAIR" id="AT2G39000">
    <property type="gene designation" value="ATNAA70"/>
</dbReference>
<dbReference type="eggNOG" id="ENOG502QQE1">
    <property type="taxonomic scope" value="Eukaryota"/>
</dbReference>
<dbReference type="HOGENOM" id="CLU_1216234_0_0_1"/>
<dbReference type="InParanoid" id="Q9ZV08"/>
<dbReference type="OrthoDB" id="249099at2759"/>
<dbReference type="PRO" id="PR:Q9ZV08"/>
<dbReference type="Proteomes" id="UP000006548">
    <property type="component" value="Chromosome 2"/>
</dbReference>
<dbReference type="ExpressionAtlas" id="Q9ZV08">
    <property type="expression patterns" value="baseline and differential"/>
</dbReference>
<dbReference type="GO" id="GO:0009507">
    <property type="term" value="C:chloroplast"/>
    <property type="evidence" value="ECO:0000314"/>
    <property type="project" value="TAIR"/>
</dbReference>
<dbReference type="GO" id="GO:0008080">
    <property type="term" value="F:N-acetyltransferase activity"/>
    <property type="evidence" value="ECO:0000314"/>
    <property type="project" value="UniProtKB"/>
</dbReference>
<dbReference type="GO" id="GO:0006474">
    <property type="term" value="P:N-terminal protein amino acid acetylation"/>
    <property type="evidence" value="ECO:0000314"/>
    <property type="project" value="UniProtKB"/>
</dbReference>
<dbReference type="GO" id="GO:0018394">
    <property type="term" value="P:peptidyl-lysine acetylation"/>
    <property type="evidence" value="ECO:0000314"/>
    <property type="project" value="UniProtKB"/>
</dbReference>
<dbReference type="CDD" id="cd04301">
    <property type="entry name" value="NAT_SF"/>
    <property type="match status" value="1"/>
</dbReference>
<dbReference type="FunFam" id="3.40.630.30:FF:000198">
    <property type="entry name" value="Acyl-CoA N-acyltransferases (NAT) superfamily protein"/>
    <property type="match status" value="1"/>
</dbReference>
<dbReference type="Gene3D" id="3.40.630.30">
    <property type="match status" value="1"/>
</dbReference>
<dbReference type="InterPro" id="IPR016181">
    <property type="entry name" value="Acyl_CoA_acyltransferase"/>
</dbReference>
<dbReference type="InterPro" id="IPR000182">
    <property type="entry name" value="GNAT_dom"/>
</dbReference>
<dbReference type="PANTHER" id="PTHR47443">
    <property type="entry name" value="ACYL-COA N-ACYLTRANSFERASES (NAT) SUPERFAMILY PROTEIN"/>
    <property type="match status" value="1"/>
</dbReference>
<dbReference type="PANTHER" id="PTHR47443:SF3">
    <property type="entry name" value="GCN5-RELATED N-ACETYLTRANSFERASE 4, CHLOROPLASTIC"/>
    <property type="match status" value="1"/>
</dbReference>
<dbReference type="Pfam" id="PF00583">
    <property type="entry name" value="Acetyltransf_1"/>
    <property type="match status" value="1"/>
</dbReference>
<dbReference type="SUPFAM" id="SSF55729">
    <property type="entry name" value="Acyl-CoA N-acyltransferases (Nat)"/>
    <property type="match status" value="1"/>
</dbReference>
<dbReference type="PROSITE" id="PS51186">
    <property type="entry name" value="GNAT"/>
    <property type="match status" value="1"/>
</dbReference>
<evidence type="ECO:0000250" key="1">
    <source>
        <dbReference type="UniProtKB" id="Q7X9V3"/>
    </source>
</evidence>
<evidence type="ECO:0000250" key="2">
    <source>
        <dbReference type="UniProtKB" id="Q96F10"/>
    </source>
</evidence>
<evidence type="ECO:0000255" key="3"/>
<evidence type="ECO:0000255" key="4">
    <source>
        <dbReference type="PROSITE-ProRule" id="PRU00532"/>
    </source>
</evidence>
<evidence type="ECO:0000269" key="5">
    <source>
    </source>
</evidence>
<evidence type="ECO:0000269" key="6">
    <source>
    </source>
</evidence>
<evidence type="ECO:0000303" key="7">
    <source>
    </source>
</evidence>
<evidence type="ECO:0000303" key="8">
    <source>
    </source>
</evidence>
<evidence type="ECO:0000305" key="9"/>
<evidence type="ECO:0000312" key="10">
    <source>
        <dbReference type="Araport" id="AT2G39000"/>
    </source>
</evidence>
<evidence type="ECO:0000312" key="11">
    <source>
        <dbReference type="EMBL" id="AAC79611.1"/>
    </source>
</evidence>
<reference key="1">
    <citation type="journal article" date="1999" name="Nature">
        <title>Sequence and analysis of chromosome 2 of the plant Arabidopsis thaliana.</title>
        <authorList>
            <person name="Lin X."/>
            <person name="Kaul S."/>
            <person name="Rounsley S.D."/>
            <person name="Shea T.P."/>
            <person name="Benito M.-I."/>
            <person name="Town C.D."/>
            <person name="Fujii C.Y."/>
            <person name="Mason T.M."/>
            <person name="Bowman C.L."/>
            <person name="Barnstead M.E."/>
            <person name="Feldblyum T.V."/>
            <person name="Buell C.R."/>
            <person name="Ketchum K.A."/>
            <person name="Lee J.J."/>
            <person name="Ronning C.M."/>
            <person name="Koo H.L."/>
            <person name="Moffat K.S."/>
            <person name="Cronin L.A."/>
            <person name="Shen M."/>
            <person name="Pai G."/>
            <person name="Van Aken S."/>
            <person name="Umayam L."/>
            <person name="Tallon L.J."/>
            <person name="Gill J.E."/>
            <person name="Adams M.D."/>
            <person name="Carrera A.J."/>
            <person name="Creasy T.H."/>
            <person name="Goodman H.M."/>
            <person name="Somerville C.R."/>
            <person name="Copenhaver G.P."/>
            <person name="Preuss D."/>
            <person name="Nierman W.C."/>
            <person name="White O."/>
            <person name="Eisen J.A."/>
            <person name="Salzberg S.L."/>
            <person name="Fraser C.M."/>
            <person name="Venter J.C."/>
        </authorList>
    </citation>
    <scope>NUCLEOTIDE SEQUENCE [LARGE SCALE GENOMIC DNA]</scope>
    <source>
        <strain>cv. Columbia</strain>
    </source>
</reference>
<reference key="2">
    <citation type="journal article" date="2017" name="Plant J.">
        <title>Araport11: a complete reannotation of the Arabidopsis thaliana reference genome.</title>
        <authorList>
            <person name="Cheng C.Y."/>
            <person name="Krishnakumar V."/>
            <person name="Chan A.P."/>
            <person name="Thibaud-Nissen F."/>
            <person name="Schobel S."/>
            <person name="Town C.D."/>
        </authorList>
    </citation>
    <scope>GENOME REANNOTATION</scope>
    <source>
        <strain>cv. Columbia</strain>
    </source>
</reference>
<reference key="3">
    <citation type="submission" date="2004-06" db="EMBL/GenBank/DDBJ databases">
        <title>Arabidopsis ORF clones.</title>
        <authorList>
            <person name="Cheuk R.F."/>
            <person name="Chen H."/>
            <person name="Kim C.J."/>
            <person name="Shinn P."/>
            <person name="Ecker J.R."/>
        </authorList>
    </citation>
    <scope>NUCLEOTIDE SEQUENCE [LARGE SCALE MRNA]</scope>
    <source>
        <strain>cv. Columbia</strain>
    </source>
</reference>
<reference key="4">
    <citation type="submission" date="2006-07" db="EMBL/GenBank/DDBJ databases">
        <title>Large-scale analysis of RIKEN Arabidopsis full-length (RAFL) cDNAs.</title>
        <authorList>
            <person name="Totoki Y."/>
            <person name="Seki M."/>
            <person name="Ishida J."/>
            <person name="Nakajima M."/>
            <person name="Enju A."/>
            <person name="Kamiya A."/>
            <person name="Narusaka M."/>
            <person name="Shin-i T."/>
            <person name="Nakagawa M."/>
            <person name="Sakamoto N."/>
            <person name="Oishi K."/>
            <person name="Kohara Y."/>
            <person name="Kobayashi M."/>
            <person name="Toyoda A."/>
            <person name="Sakaki Y."/>
            <person name="Sakurai T."/>
            <person name="Iida K."/>
            <person name="Akiyama K."/>
            <person name="Satou M."/>
            <person name="Toyoda T."/>
            <person name="Konagaya A."/>
            <person name="Carninci P."/>
            <person name="Kawai J."/>
            <person name="Hayashizaki Y."/>
            <person name="Shinozaki K."/>
        </authorList>
    </citation>
    <scope>NUCLEOTIDE SEQUENCE [LARGE SCALE MRNA] (ISOFORM 2)</scope>
    <source>
        <strain>cv. Columbia</strain>
    </source>
</reference>
<reference key="5">
    <citation type="journal article" date="2015" name="Proteomics">
        <title>Molecular identification and functional characterization of the first Nalpha-acetyltransferase in plastids by global acetylome profiling.</title>
        <authorList>
            <person name="Dinh T.V."/>
            <person name="Bienvenut W.V."/>
            <person name="Linster E."/>
            <person name="Feldman-Salit A."/>
            <person name="Jung V.A."/>
            <person name="Meinnel T."/>
            <person name="Hell R."/>
            <person name="Giglione C."/>
            <person name="Wirtz M."/>
        </authorList>
    </citation>
    <scope>FUNCTION</scope>
    <scope>CATALYTIC ACTIVITY</scope>
    <scope>SUBCELLULAR LOCATION</scope>
    <scope>AUTOACETYLATION</scope>
    <scope>ACETYLATION AT LYS-217; LYS-254 AND LYS-265</scope>
    <scope>IDENTIFICATION BY MASS SPECTROMETRY</scope>
    <source>
        <strain>cv. Columbia</strain>
    </source>
</reference>
<reference key="6">
    <citation type="journal article" date="2020" name="Mol. Syst. Biol.">
        <title>Dual lysine and N-terminal acetyltransferases reveal the complexity underpinning protein acetylation.</title>
        <authorList>
            <person name="Bienvenut W.V."/>
            <person name="Bruenje A."/>
            <person name="Boyer J.-B."/>
            <person name="Muehlenbeck J.S."/>
            <person name="Bernal G."/>
            <person name="Lassowskat I."/>
            <person name="Dian C."/>
            <person name="Linster E."/>
            <person name="Dinh T.V."/>
            <person name="Koskela M.M."/>
            <person name="Jung V."/>
            <person name="Seidel J."/>
            <person name="Schyrba L.K."/>
            <person name="Ivanauskaite A."/>
            <person name="Eirich J."/>
            <person name="Hell R."/>
            <person name="Schwarzer D."/>
            <person name="Mulo P."/>
            <person name="Wirtz M."/>
            <person name="Meinnel T."/>
            <person name="Giglione C."/>
            <person name="Finkemeier I."/>
        </authorList>
    </citation>
    <scope>FUNCTION</scope>
    <scope>CATALYTIC ACTIVITY</scope>
    <scope>SUBCELLULAR LOCATION</scope>
    <scope>TISSUE SPECIFICITY</scope>
    <scope>AUTOACETYLATION</scope>
    <scope>GENE FAMILY</scope>
    <scope>NOMENCLATURE</scope>
    <source>
        <strain>cv. Columbia</strain>
    </source>
</reference>
<organism>
    <name type="scientific">Arabidopsis thaliana</name>
    <name type="common">Mouse-ear cress</name>
    <dbReference type="NCBI Taxonomy" id="3702"/>
    <lineage>
        <taxon>Eukaryota</taxon>
        <taxon>Viridiplantae</taxon>
        <taxon>Streptophyta</taxon>
        <taxon>Embryophyta</taxon>
        <taxon>Tracheophyta</taxon>
        <taxon>Spermatophyta</taxon>
        <taxon>Magnoliopsida</taxon>
        <taxon>eudicotyledons</taxon>
        <taxon>Gunneridae</taxon>
        <taxon>Pentapetalae</taxon>
        <taxon>rosids</taxon>
        <taxon>malvids</taxon>
        <taxon>Brassicales</taxon>
        <taxon>Brassicaceae</taxon>
        <taxon>Camelineae</taxon>
        <taxon>Arabidopsis</taxon>
    </lineage>
</organism>
<accession>Q9ZV08</accession>
<accession>Q0WQ36</accession>
<comment type="function">
    <text evidence="5 6">Protein acetyltransferase with dual specificity triggering both N-alpha-acetylation (NTA), with a large spectrum of modified N-termini, including methionine, alanine, serine, threonine and to a lower extent glycine and valine as substrates, and epsilon-lysine acetylation (KA) of several plastid proteins.</text>
</comment>
<comment type="catalytic activity">
    <reaction evidence="5 6">
        <text>an N-terminal L-alpha-aminoacyl-[protein] + acetyl-CoA = N-terminal N(alpha)-acetyl-L-alpha-aminoacyl-[protein] + CoA + H(+)</text>
        <dbReference type="Rhea" id="RHEA:21028"/>
        <dbReference type="Rhea" id="RHEA-COMP:10636"/>
        <dbReference type="Rhea" id="RHEA-COMP:15589"/>
        <dbReference type="ChEBI" id="CHEBI:15378"/>
        <dbReference type="ChEBI" id="CHEBI:57287"/>
        <dbReference type="ChEBI" id="CHEBI:57288"/>
        <dbReference type="ChEBI" id="CHEBI:78597"/>
        <dbReference type="ChEBI" id="CHEBI:78598"/>
    </reaction>
</comment>
<comment type="catalytic activity">
    <reaction evidence="6">
        <text>L-lysyl-[protein] + acetyl-CoA = N(6)-acetyl-L-lysyl-[protein] + CoA + H(+)</text>
        <dbReference type="Rhea" id="RHEA:45948"/>
        <dbReference type="Rhea" id="RHEA-COMP:9752"/>
        <dbReference type="Rhea" id="RHEA-COMP:10731"/>
        <dbReference type="ChEBI" id="CHEBI:15378"/>
        <dbReference type="ChEBI" id="CHEBI:29969"/>
        <dbReference type="ChEBI" id="CHEBI:57287"/>
        <dbReference type="ChEBI" id="CHEBI:57288"/>
        <dbReference type="ChEBI" id="CHEBI:61930"/>
        <dbReference type="EC" id="2.3.1.48"/>
    </reaction>
</comment>
<comment type="catalytic activity">
    <reaction evidence="5 6">
        <text>N-terminal L-alanyl-[protein] + acetyl-CoA = N-terminal N(alpha)-acetyl-L-alanyl-[protein] + CoA + H(+)</text>
        <dbReference type="Rhea" id="RHEA:50500"/>
        <dbReference type="Rhea" id="RHEA-COMP:12701"/>
        <dbReference type="Rhea" id="RHEA-COMP:12702"/>
        <dbReference type="ChEBI" id="CHEBI:15378"/>
        <dbReference type="ChEBI" id="CHEBI:57287"/>
        <dbReference type="ChEBI" id="CHEBI:57288"/>
        <dbReference type="ChEBI" id="CHEBI:64718"/>
        <dbReference type="ChEBI" id="CHEBI:83683"/>
        <dbReference type="EC" id="2.3.1.255"/>
    </reaction>
</comment>
<comment type="catalytic activity">
    <reaction evidence="5 6">
        <text>N-terminal L-seryl-[protein] + acetyl-CoA = N-terminal N(alpha)-acetyl-L-seryl-[protein] + CoA + H(+)</text>
        <dbReference type="Rhea" id="RHEA:50504"/>
        <dbReference type="Rhea" id="RHEA-COMP:12703"/>
        <dbReference type="Rhea" id="RHEA-COMP:12704"/>
        <dbReference type="ChEBI" id="CHEBI:15378"/>
        <dbReference type="ChEBI" id="CHEBI:57287"/>
        <dbReference type="ChEBI" id="CHEBI:57288"/>
        <dbReference type="ChEBI" id="CHEBI:64738"/>
        <dbReference type="ChEBI" id="CHEBI:83690"/>
        <dbReference type="EC" id="2.3.1.255"/>
    </reaction>
</comment>
<comment type="catalytic activity">
    <reaction evidence="5 6">
        <text>N-terminal L-threonyl-[protein] + acetyl-CoA = N-terminal N(alpha)-acetyl-L-threonyl-[protein] + CoA + H(+)</text>
        <dbReference type="Rhea" id="RHEA:50516"/>
        <dbReference type="Rhea" id="RHEA-COMP:12709"/>
        <dbReference type="Rhea" id="RHEA-COMP:12710"/>
        <dbReference type="ChEBI" id="CHEBI:15378"/>
        <dbReference type="ChEBI" id="CHEBI:57287"/>
        <dbReference type="ChEBI" id="CHEBI:57288"/>
        <dbReference type="ChEBI" id="CHEBI:64739"/>
        <dbReference type="ChEBI" id="CHEBI:133375"/>
        <dbReference type="EC" id="2.3.1.255"/>
    </reaction>
</comment>
<comment type="catalytic activity">
    <reaction evidence="5 6">
        <text>N-terminal L-methionyl-[protein] + acetyl-CoA = N-terminal N(alpha)-acetyl-L-methionyl-[protein] + CoA + H(+)</text>
        <dbReference type="Rhea" id="RHEA:75239"/>
        <dbReference type="Rhea" id="RHEA-COMP:18493"/>
        <dbReference type="Rhea" id="RHEA-COMP:18494"/>
        <dbReference type="ChEBI" id="CHEBI:15378"/>
        <dbReference type="ChEBI" id="CHEBI:57287"/>
        <dbReference type="ChEBI" id="CHEBI:57288"/>
        <dbReference type="ChEBI" id="CHEBI:64731"/>
        <dbReference type="ChEBI" id="CHEBI:133414"/>
    </reaction>
</comment>
<comment type="catalytic activity">
    <reaction evidence="5 6">
        <text>N-terminal L-valyl-[protein] + acetyl-CoA = N-terminal N(alpha)-acetyl-L-valyl-[protein] + CoA + H(+)</text>
        <dbReference type="Rhea" id="RHEA:50508"/>
        <dbReference type="Rhea" id="RHEA-COMP:12705"/>
        <dbReference type="Rhea" id="RHEA-COMP:12706"/>
        <dbReference type="ChEBI" id="CHEBI:15378"/>
        <dbReference type="ChEBI" id="CHEBI:57287"/>
        <dbReference type="ChEBI" id="CHEBI:57288"/>
        <dbReference type="ChEBI" id="CHEBI:64741"/>
        <dbReference type="ChEBI" id="CHEBI:133371"/>
        <dbReference type="EC" id="2.3.1.255"/>
    </reaction>
</comment>
<comment type="catalytic activity">
    <reaction evidence="5 6">
        <text>N-terminal glycyl-[protein] + acetyl-CoA = N-terminal N(alpha)-acetylglycyl-[protein] + CoA + H(+)</text>
        <dbReference type="Rhea" id="RHEA:50496"/>
        <dbReference type="Rhea" id="RHEA-COMP:12666"/>
        <dbReference type="Rhea" id="RHEA-COMP:12700"/>
        <dbReference type="ChEBI" id="CHEBI:15378"/>
        <dbReference type="ChEBI" id="CHEBI:57287"/>
        <dbReference type="ChEBI" id="CHEBI:57288"/>
        <dbReference type="ChEBI" id="CHEBI:64723"/>
        <dbReference type="ChEBI" id="CHEBI:133369"/>
        <dbReference type="EC" id="2.3.1.255"/>
    </reaction>
</comment>
<comment type="subunit">
    <text evidence="1">Oligomer.</text>
</comment>
<comment type="subcellular location">
    <subcellularLocation>
        <location evidence="5 6">Plastid</location>
        <location evidence="5 6">Chloroplast</location>
    </subcellularLocation>
</comment>
<comment type="alternative products">
    <event type="alternative splicing"/>
    <isoform>
        <id>Q9ZV08-1</id>
        <name>1</name>
        <sequence type="displayed"/>
    </isoform>
    <isoform>
        <id>Q9ZV08-2</id>
        <name>2</name>
        <sequence type="described" ref="VSP_061872 VSP_061873"/>
    </isoform>
</comment>
<comment type="tissue specificity">
    <text evidence="6">Expressed in green tissues.</text>
</comment>
<comment type="PTM">
    <text evidence="5 6">Autoacetylated at K-217, K-254 and K-265.</text>
</comment>
<comment type="similarity">
    <text evidence="9">Belongs to the acetyltransferase family. GNAT subfamily.</text>
</comment>
<proteinExistence type="evidence at protein level"/>
<gene>
    <name evidence="8" type="primary">GNAT4</name>
    <name evidence="7" type="synonym">NAA70</name>
    <name evidence="10" type="ordered locus">At2g39000</name>
    <name evidence="11" type="ORF">T7F6.17</name>
</gene>